<sequence length="468" mass="52691">MSVVTRFAPSPTGYLHVGGARTALYSWLVAKAQGGEFVLRIEDTDRERSTQPAIDAILEGMEWLGLSWDRGPYYQTQRFERYQELIDKLLEEDKAYKCYCSTERLEKMREEQMAAGEKPRYDGHCRDNPNVGGDKYVIRFRNPQDGSVVFDDHIRGRIEFANTELDDLIIARTDGTPTYNFCVVVDDWDMDITHVVRGEDHINNTPRQINILKALGAPVPQYAHVSMILGDDGKKLSKRHGAVSVMQYRDDGYVPEAVVNYLARLGWSHGDQEIFSRDELVEYFKLDDVNKAASAFNTEKLNWLNQHYMKTLPAEQVAPQLQWQFDQIGVDTSNGPALEQVVSLQADRVKTLKEMAAISRYFFESFDEFDEKAAKKHLRPVAKEPLVKAKELLGAISDWNAANIQAAINQTAADLDVGMGKVGMPLRVAATGGGNSPSLDVTLELIPQQTVLARIDLALEFIANRENA</sequence>
<evidence type="ECO:0000255" key="1">
    <source>
        <dbReference type="HAMAP-Rule" id="MF_00022"/>
    </source>
</evidence>
<protein>
    <recommendedName>
        <fullName evidence="1">Glutamate--tRNA ligase</fullName>
        <ecNumber evidence="1">6.1.1.17</ecNumber>
    </recommendedName>
    <alternativeName>
        <fullName evidence="1">Glutamyl-tRNA synthetase</fullName>
        <shortName evidence="1">GluRS</shortName>
    </alternativeName>
</protein>
<accession>Q5QX98</accession>
<reference key="1">
    <citation type="journal article" date="2004" name="Proc. Natl. Acad. Sci. U.S.A.">
        <title>Genome sequence of the deep-sea gamma-proteobacterium Idiomarina loihiensis reveals amino acid fermentation as a source of carbon and energy.</title>
        <authorList>
            <person name="Hou S."/>
            <person name="Saw J.H."/>
            <person name="Lee K.S."/>
            <person name="Freitas T.A."/>
            <person name="Belisle C."/>
            <person name="Kawarabayasi Y."/>
            <person name="Donachie S.P."/>
            <person name="Pikina A."/>
            <person name="Galperin M.Y."/>
            <person name="Koonin E.V."/>
            <person name="Makarova K.S."/>
            <person name="Omelchenko M.V."/>
            <person name="Sorokin A."/>
            <person name="Wolf Y.I."/>
            <person name="Li Q.X."/>
            <person name="Keum Y.S."/>
            <person name="Campbell S."/>
            <person name="Denery J."/>
            <person name="Aizawa S."/>
            <person name="Shibata S."/>
            <person name="Malahoff A."/>
            <person name="Alam M."/>
        </authorList>
    </citation>
    <scope>NUCLEOTIDE SEQUENCE [LARGE SCALE GENOMIC DNA]</scope>
    <source>
        <strain>ATCC BAA-735 / DSM 15497 / L2-TR</strain>
    </source>
</reference>
<gene>
    <name evidence="1" type="primary">gltX</name>
    <name type="ordered locus">IL1770</name>
</gene>
<organism>
    <name type="scientific">Idiomarina loihiensis (strain ATCC BAA-735 / DSM 15497 / L2-TR)</name>
    <dbReference type="NCBI Taxonomy" id="283942"/>
    <lineage>
        <taxon>Bacteria</taxon>
        <taxon>Pseudomonadati</taxon>
        <taxon>Pseudomonadota</taxon>
        <taxon>Gammaproteobacteria</taxon>
        <taxon>Alteromonadales</taxon>
        <taxon>Idiomarinaceae</taxon>
        <taxon>Idiomarina</taxon>
    </lineage>
</organism>
<comment type="function">
    <text evidence="1">Catalyzes the attachment of glutamate to tRNA(Glu) in a two-step reaction: glutamate is first activated by ATP to form Glu-AMP and then transferred to the acceptor end of tRNA(Glu).</text>
</comment>
<comment type="catalytic activity">
    <reaction evidence="1">
        <text>tRNA(Glu) + L-glutamate + ATP = L-glutamyl-tRNA(Glu) + AMP + diphosphate</text>
        <dbReference type="Rhea" id="RHEA:23540"/>
        <dbReference type="Rhea" id="RHEA-COMP:9663"/>
        <dbReference type="Rhea" id="RHEA-COMP:9680"/>
        <dbReference type="ChEBI" id="CHEBI:29985"/>
        <dbReference type="ChEBI" id="CHEBI:30616"/>
        <dbReference type="ChEBI" id="CHEBI:33019"/>
        <dbReference type="ChEBI" id="CHEBI:78442"/>
        <dbReference type="ChEBI" id="CHEBI:78520"/>
        <dbReference type="ChEBI" id="CHEBI:456215"/>
        <dbReference type="EC" id="6.1.1.17"/>
    </reaction>
</comment>
<comment type="cofactor">
    <cofactor evidence="1">
        <name>Zn(2+)</name>
        <dbReference type="ChEBI" id="CHEBI:29105"/>
    </cofactor>
    <text evidence="1">Binds 1 zinc ion per subunit.</text>
</comment>
<comment type="subunit">
    <text evidence="1">Monomer.</text>
</comment>
<comment type="subcellular location">
    <subcellularLocation>
        <location evidence="1">Cytoplasm</location>
    </subcellularLocation>
</comment>
<comment type="similarity">
    <text evidence="1">Belongs to the class-I aminoacyl-tRNA synthetase family. Glutamate--tRNA ligase type 1 subfamily.</text>
</comment>
<dbReference type="EC" id="6.1.1.17" evidence="1"/>
<dbReference type="EMBL" id="AE017340">
    <property type="protein sequence ID" value="AAV82603.1"/>
    <property type="molecule type" value="Genomic_DNA"/>
</dbReference>
<dbReference type="RefSeq" id="WP_011235006.1">
    <property type="nucleotide sequence ID" value="NC_006512.1"/>
</dbReference>
<dbReference type="SMR" id="Q5QX98"/>
<dbReference type="STRING" id="283942.IL1770"/>
<dbReference type="GeneID" id="41336951"/>
<dbReference type="KEGG" id="ilo:IL1770"/>
<dbReference type="eggNOG" id="COG0008">
    <property type="taxonomic scope" value="Bacteria"/>
</dbReference>
<dbReference type="HOGENOM" id="CLU_015768_6_0_6"/>
<dbReference type="OrthoDB" id="9807503at2"/>
<dbReference type="Proteomes" id="UP000001171">
    <property type="component" value="Chromosome"/>
</dbReference>
<dbReference type="GO" id="GO:0005829">
    <property type="term" value="C:cytosol"/>
    <property type="evidence" value="ECO:0007669"/>
    <property type="project" value="TreeGrafter"/>
</dbReference>
<dbReference type="GO" id="GO:0005524">
    <property type="term" value="F:ATP binding"/>
    <property type="evidence" value="ECO:0007669"/>
    <property type="project" value="UniProtKB-UniRule"/>
</dbReference>
<dbReference type="GO" id="GO:0004818">
    <property type="term" value="F:glutamate-tRNA ligase activity"/>
    <property type="evidence" value="ECO:0007669"/>
    <property type="project" value="UniProtKB-UniRule"/>
</dbReference>
<dbReference type="GO" id="GO:0000049">
    <property type="term" value="F:tRNA binding"/>
    <property type="evidence" value="ECO:0007669"/>
    <property type="project" value="InterPro"/>
</dbReference>
<dbReference type="GO" id="GO:0008270">
    <property type="term" value="F:zinc ion binding"/>
    <property type="evidence" value="ECO:0007669"/>
    <property type="project" value="UniProtKB-UniRule"/>
</dbReference>
<dbReference type="GO" id="GO:0006424">
    <property type="term" value="P:glutamyl-tRNA aminoacylation"/>
    <property type="evidence" value="ECO:0007669"/>
    <property type="project" value="UniProtKB-UniRule"/>
</dbReference>
<dbReference type="CDD" id="cd00808">
    <property type="entry name" value="GluRS_core"/>
    <property type="match status" value="1"/>
</dbReference>
<dbReference type="FunFam" id="3.40.50.620:FF:000007">
    <property type="entry name" value="Glutamate--tRNA ligase"/>
    <property type="match status" value="1"/>
</dbReference>
<dbReference type="Gene3D" id="1.10.10.350">
    <property type="match status" value="1"/>
</dbReference>
<dbReference type="Gene3D" id="3.40.50.620">
    <property type="entry name" value="HUPs"/>
    <property type="match status" value="1"/>
</dbReference>
<dbReference type="HAMAP" id="MF_00022">
    <property type="entry name" value="Glu_tRNA_synth_type1"/>
    <property type="match status" value="1"/>
</dbReference>
<dbReference type="InterPro" id="IPR045462">
    <property type="entry name" value="aa-tRNA-synth_I_cd-bd"/>
</dbReference>
<dbReference type="InterPro" id="IPR020751">
    <property type="entry name" value="aa-tRNA-synth_I_codon-bd_sub2"/>
</dbReference>
<dbReference type="InterPro" id="IPR001412">
    <property type="entry name" value="aa-tRNA-synth_I_CS"/>
</dbReference>
<dbReference type="InterPro" id="IPR008925">
    <property type="entry name" value="aa_tRNA-synth_I_cd-bd_sf"/>
</dbReference>
<dbReference type="InterPro" id="IPR004527">
    <property type="entry name" value="Glu-tRNA-ligase_bac/mito"/>
</dbReference>
<dbReference type="InterPro" id="IPR000924">
    <property type="entry name" value="Glu/Gln-tRNA-synth"/>
</dbReference>
<dbReference type="InterPro" id="IPR020058">
    <property type="entry name" value="Glu/Gln-tRNA-synth_Ib_cat-dom"/>
</dbReference>
<dbReference type="InterPro" id="IPR049940">
    <property type="entry name" value="GluQ/Sye"/>
</dbReference>
<dbReference type="InterPro" id="IPR033910">
    <property type="entry name" value="GluRS_core"/>
</dbReference>
<dbReference type="InterPro" id="IPR014729">
    <property type="entry name" value="Rossmann-like_a/b/a_fold"/>
</dbReference>
<dbReference type="NCBIfam" id="TIGR00464">
    <property type="entry name" value="gltX_bact"/>
    <property type="match status" value="1"/>
</dbReference>
<dbReference type="PANTHER" id="PTHR43311">
    <property type="entry name" value="GLUTAMATE--TRNA LIGASE"/>
    <property type="match status" value="1"/>
</dbReference>
<dbReference type="PANTHER" id="PTHR43311:SF2">
    <property type="entry name" value="GLUTAMATE--TRNA LIGASE, MITOCHONDRIAL-RELATED"/>
    <property type="match status" value="1"/>
</dbReference>
<dbReference type="Pfam" id="PF19269">
    <property type="entry name" value="Anticodon_2"/>
    <property type="match status" value="1"/>
</dbReference>
<dbReference type="Pfam" id="PF00749">
    <property type="entry name" value="tRNA-synt_1c"/>
    <property type="match status" value="1"/>
</dbReference>
<dbReference type="PRINTS" id="PR00987">
    <property type="entry name" value="TRNASYNTHGLU"/>
</dbReference>
<dbReference type="SUPFAM" id="SSF48163">
    <property type="entry name" value="An anticodon-binding domain of class I aminoacyl-tRNA synthetases"/>
    <property type="match status" value="1"/>
</dbReference>
<dbReference type="SUPFAM" id="SSF52374">
    <property type="entry name" value="Nucleotidylyl transferase"/>
    <property type="match status" value="1"/>
</dbReference>
<dbReference type="PROSITE" id="PS00178">
    <property type="entry name" value="AA_TRNA_LIGASE_I"/>
    <property type="match status" value="1"/>
</dbReference>
<proteinExistence type="inferred from homology"/>
<keyword id="KW-0030">Aminoacyl-tRNA synthetase</keyword>
<keyword id="KW-0067">ATP-binding</keyword>
<keyword id="KW-0963">Cytoplasm</keyword>
<keyword id="KW-0436">Ligase</keyword>
<keyword id="KW-0479">Metal-binding</keyword>
<keyword id="KW-0547">Nucleotide-binding</keyword>
<keyword id="KW-0648">Protein biosynthesis</keyword>
<keyword id="KW-1185">Reference proteome</keyword>
<keyword id="KW-0862">Zinc</keyword>
<name>SYE_IDILO</name>
<feature type="chain" id="PRO_0000119580" description="Glutamate--tRNA ligase">
    <location>
        <begin position="1"/>
        <end position="468"/>
    </location>
</feature>
<feature type="short sequence motif" description="'HIGH' region" evidence="1">
    <location>
        <begin position="9"/>
        <end position="19"/>
    </location>
</feature>
<feature type="short sequence motif" description="'KMSKS' region" evidence="1">
    <location>
        <begin position="235"/>
        <end position="239"/>
    </location>
</feature>
<feature type="binding site" evidence="1">
    <location>
        <position position="98"/>
    </location>
    <ligand>
        <name>Zn(2+)</name>
        <dbReference type="ChEBI" id="CHEBI:29105"/>
    </ligand>
</feature>
<feature type="binding site" evidence="1">
    <location>
        <position position="100"/>
    </location>
    <ligand>
        <name>Zn(2+)</name>
        <dbReference type="ChEBI" id="CHEBI:29105"/>
    </ligand>
</feature>
<feature type="binding site" evidence="1">
    <location>
        <position position="125"/>
    </location>
    <ligand>
        <name>Zn(2+)</name>
        <dbReference type="ChEBI" id="CHEBI:29105"/>
    </ligand>
</feature>
<feature type="binding site" evidence="1">
    <location>
        <position position="127"/>
    </location>
    <ligand>
        <name>Zn(2+)</name>
        <dbReference type="ChEBI" id="CHEBI:29105"/>
    </ligand>
</feature>
<feature type="binding site" evidence="1">
    <location>
        <position position="238"/>
    </location>
    <ligand>
        <name>ATP</name>
        <dbReference type="ChEBI" id="CHEBI:30616"/>
    </ligand>
</feature>